<reference key="1">
    <citation type="submission" date="1998-01" db="EMBL/GenBank/DDBJ databases">
        <authorList>
            <person name="Zeng Q."/>
            <person name="Tan Y.H."/>
            <person name="Hong W."/>
        </authorList>
    </citation>
    <scope>NUCLEOTIDE SEQUENCE [MRNA] (ISOFORM 1)</scope>
</reference>
<reference key="2">
    <citation type="submission" date="2000-03" db="EMBL/GenBank/DDBJ databases">
        <title>Full-length of some muscular transcripts, Telethon (Italy) project B41.</title>
        <authorList>
            <person name="Ievolella C."/>
            <person name="Stanchi F."/>
            <person name="Pacchioni B."/>
            <person name="Silvia T."/>
            <person name="Frigimelica E."/>
            <person name="Scannapieco P."/>
            <person name="Corso V."/>
            <person name="Biasio B."/>
            <person name="Lanfranchi G."/>
        </authorList>
    </citation>
    <scope>NUCLEOTIDE SEQUENCE [LARGE SCALE MRNA] (ISOFORM 3)</scope>
    <source>
        <tissue>Skeletal muscle</tissue>
    </source>
</reference>
<reference key="3">
    <citation type="submission" date="2003-05" db="EMBL/GenBank/DDBJ databases">
        <title>Cloning of human full-length CDSs in BD Creator(TM) system donor vector.</title>
        <authorList>
            <person name="Kalnine N."/>
            <person name="Chen X."/>
            <person name="Rolfs A."/>
            <person name="Halleck A."/>
            <person name="Hines L."/>
            <person name="Eisenstein S."/>
            <person name="Koundinya M."/>
            <person name="Raphael J."/>
            <person name="Moreira D."/>
            <person name="Kelley T."/>
            <person name="LaBaer J."/>
            <person name="Lin Y."/>
            <person name="Phelan M."/>
            <person name="Farmer A."/>
        </authorList>
    </citation>
    <scope>NUCLEOTIDE SEQUENCE [LARGE SCALE MRNA] (ISOFORM 2)</scope>
</reference>
<reference key="4">
    <citation type="journal article" date="2004" name="Genome Res.">
        <title>The status, quality, and expansion of the NIH full-length cDNA project: the Mammalian Gene Collection (MGC).</title>
        <authorList>
            <consortium name="The MGC Project Team"/>
        </authorList>
    </citation>
    <scope>NUCLEOTIDE SEQUENCE [LARGE SCALE MRNA] (ISOFORM 2)</scope>
    <source>
        <tissue>Eye</tissue>
    </source>
</reference>
<reference key="5">
    <citation type="journal article" date="1997" name="Recept. Signal Transduct.">
        <title>Multiple phosphotyrosine phosphatase mRNAs are expressed in the human lung fibroblast cell line WI-38.</title>
        <authorList>
            <person name="Dayton M.A."/>
            <person name="Knobloch T.J."/>
        </authorList>
    </citation>
    <scope>NUCLEOTIDE SEQUENCE [MRNA] OF 93-148 (ISOFORM 1)</scope>
    <source>
        <tissue>Lung fibroblast</tissue>
    </source>
</reference>
<reference key="6">
    <citation type="journal article" date="2001" name="Biochem. Biophys. Res. Commun.">
        <title>Role of PRL-3, a human muscle-specific tyrosine phosphatase, in angiotensin-II signaling.</title>
        <authorList>
            <person name="Matter W.F."/>
            <person name="Estridge T."/>
            <person name="Zhang C."/>
            <person name="Belagaje R."/>
            <person name="Stancato L."/>
            <person name="Dixon J."/>
            <person name="Johnson B."/>
            <person name="Bloem L."/>
            <person name="Pickard T."/>
            <person name="Donaghue M."/>
            <person name="Acton S."/>
            <person name="Jeyaseelan R."/>
            <person name="Kadambi V."/>
            <person name="Vlahos C.J."/>
        </authorList>
    </citation>
    <scope>TISSUE SPECIFICITY</scope>
    <scope>MUTAGENESIS OF CYS-104</scope>
    <scope>ACTIVITY REGULATION</scope>
    <scope>FUNCTION</scope>
</reference>
<reference key="7">
    <citation type="journal article" date="2001" name="Science">
        <title>A phosphatase associated with metastasis of colorectal cancer.</title>
        <authorList>
            <person name="Saha S."/>
            <person name="Bardelli A."/>
            <person name="Buckhaults P."/>
            <person name="Velculescu V.E."/>
            <person name="Rago C."/>
            <person name="St Croix B."/>
            <person name="Romans K.E."/>
            <person name="Choti M.A."/>
            <person name="Lengauer C."/>
            <person name="Kinzler K.W."/>
            <person name="Vogelstein B."/>
        </authorList>
    </citation>
    <scope>OVEREXPRESSION IN COLON CANCER</scope>
</reference>
<reference key="8">
    <citation type="journal article" date="2002" name="J. Biol. Chem.">
        <title>The tyrosine phosphatase PRL-1 localizes to the endoplasmic reticulum and the mitotic spindle and is required for normal mitosis.</title>
        <authorList>
            <person name="Wang J."/>
            <person name="Kirby C.E."/>
            <person name="Herbst R."/>
        </authorList>
    </citation>
    <scope>INTERACTION WITH TUBULIN</scope>
</reference>
<reference key="9">
    <citation type="journal article" date="2002" name="Mol. Cancer Ther.">
        <title>Pentamidine is an inhibitor of PRL phosphatases with anticancer activity.</title>
        <authorList>
            <person name="Pathak M.K."/>
            <person name="Dhawan D."/>
            <person name="Lindner D.J."/>
            <person name="Borden E.C."/>
            <person name="Farver C."/>
            <person name="Yi T."/>
        </authorList>
    </citation>
    <scope>ACTIVITY REGULATION</scope>
</reference>
<reference key="10">
    <citation type="journal article" date="2003" name="Cancer Res.">
        <title>PRL-3 and PRL-1 promote cell migration, invasion, and metastasis.</title>
        <authorList>
            <person name="Zeng Q."/>
            <person name="Dong J.-M."/>
            <person name="Guo K."/>
            <person name="Li J."/>
            <person name="Tan H.-X."/>
            <person name="Koh V."/>
            <person name="Pallen C.J."/>
            <person name="Manser E."/>
            <person name="Hong W."/>
        </authorList>
    </citation>
    <scope>FUNCTION</scope>
    <scope>SUBCELLULAR LOCATION</scope>
    <scope>MUTAGENESIS OF CYS-104</scope>
</reference>
<reference key="11">
    <citation type="journal article" date="2004" name="FEBS Lett.">
        <title>Structure of human PRL-3, the phosphatase associated with cancer metastasis.</title>
        <authorList>
            <person name="Kim K.-A."/>
            <person name="Song J.-S."/>
            <person name="Jee J."/>
            <person name="Sheen M.R."/>
            <person name="Lee C."/>
            <person name="Lee T.G."/>
            <person name="Ro S."/>
            <person name="Cho J.M."/>
            <person name="Lee W."/>
            <person name="Yamazaki T."/>
            <person name="Jeon Y.H."/>
            <person name="Cheong C."/>
        </authorList>
    </citation>
    <scope>STRUCTURE BY NMR OF 1-173 (ISOFORM 1)</scope>
</reference>
<reference key="12">
    <citation type="journal article" date="2004" name="J. Biol. Chem.">
        <title>Structural insights into molecular function of the metastasis-associated phosphatase PRL-3.</title>
        <authorList>
            <person name="Kozlov G."/>
            <person name="Cheng J."/>
            <person name="Ziomek E."/>
            <person name="Banville D."/>
            <person name="Gehring K."/>
            <person name="Ekiel I."/>
        </authorList>
    </citation>
    <scope>STRUCTURE BY NMR OF 1-169 (ISOFORM 1)</scope>
    <scope>DISULFIDE BOND</scope>
    <scope>ENZYME ACTIVITY (ISOFORMS 1 AND 2)</scope>
    <scope>MUTAGENESIS OF CYS-49; ASP-71; ASP-72 AND ALA-111</scope>
</reference>
<feature type="chain" id="PRO_0000094788" description="Protein tyrosine phosphatase type IVA 3">
    <location>
        <begin position="1"/>
        <end position="170"/>
    </location>
</feature>
<feature type="propeptide" id="PRO_0000396735" description="Removed in mature form" evidence="1">
    <location>
        <begin position="171"/>
        <end position="173"/>
    </location>
</feature>
<feature type="domain" description="Tyrosine-protein phosphatase" evidence="2">
    <location>
        <begin position="8"/>
        <end position="161"/>
    </location>
</feature>
<feature type="active site" description="Proton donor" evidence="11">
    <location>
        <position position="72"/>
    </location>
</feature>
<feature type="active site" description="Phosphocysteine intermediate" evidence="2">
    <location>
        <position position="104"/>
    </location>
</feature>
<feature type="binding site">
    <location>
        <position position="110"/>
    </location>
    <ligand>
        <name>substrate</name>
    </ligand>
</feature>
<feature type="modified residue" description="Cysteine methyl ester" evidence="1">
    <location>
        <position position="170"/>
    </location>
</feature>
<feature type="lipid moiety-binding region" description="S-farnesyl cysteine" evidence="1">
    <location>
        <position position="170"/>
    </location>
</feature>
<feature type="disulfide bond" evidence="7">
    <location>
        <begin position="49"/>
        <end position="104"/>
    </location>
</feature>
<feature type="splice variant" id="VSP_014406" description="In isoform 3." evidence="9">
    <location>
        <begin position="39"/>
        <end position="124"/>
    </location>
</feature>
<feature type="splice variant" id="VSP_014407" description="In isoform 2." evidence="8 10">
    <location>
        <begin position="111"/>
        <end position="135"/>
    </location>
</feature>
<feature type="mutagenesis site" description="No effect on enzymatic activity." evidence="7">
    <original>C</original>
    <variation>A</variation>
    <location>
        <position position="49"/>
    </location>
</feature>
<feature type="mutagenesis site" description="No effect on enzymatic activity." evidence="7">
    <original>D</original>
    <variation>A</variation>
    <location>
        <position position="71"/>
    </location>
</feature>
<feature type="mutagenesis site" description="Abolishes enzymatic activity." evidence="7">
    <original>D</original>
    <variation>A</variation>
    <location>
        <position position="72"/>
    </location>
</feature>
<feature type="mutagenesis site" description="95% loss of enzymatic activity." evidence="3 6">
    <original>C</original>
    <variation>A</variation>
    <variation>S</variation>
    <location>
        <position position="104"/>
    </location>
</feature>
<feature type="mutagenesis site" description="Reduces migration-promoting activity." evidence="3 6">
    <original>C</original>
    <variation>S</variation>
    <location>
        <position position="104"/>
    </location>
</feature>
<feature type="mutagenesis site" description="Enhances catalytic activity." evidence="7">
    <original>A</original>
    <variation>S</variation>
    <location>
        <position position="111"/>
    </location>
</feature>
<feature type="sequence conflict" description="In Ref. 1; AAC29314." evidence="11" ref="1">
    <original>A</original>
    <variation>R</variation>
    <location>
        <position position="140"/>
    </location>
</feature>
<feature type="strand" evidence="15">
    <location>
        <begin position="10"/>
        <end position="14"/>
    </location>
</feature>
<feature type="strand" evidence="15">
    <location>
        <begin position="17"/>
        <end position="21"/>
    </location>
</feature>
<feature type="strand" evidence="14">
    <location>
        <begin position="23"/>
        <end position="26"/>
    </location>
</feature>
<feature type="strand" evidence="15">
    <location>
        <begin position="27"/>
        <end position="29"/>
    </location>
</feature>
<feature type="helix" evidence="15">
    <location>
        <begin position="30"/>
        <end position="39"/>
    </location>
</feature>
<feature type="strand" evidence="15">
    <location>
        <begin position="42"/>
        <end position="47"/>
    </location>
</feature>
<feature type="helix" evidence="15">
    <location>
        <begin position="56"/>
        <end position="60"/>
    </location>
</feature>
<feature type="strand" evidence="15">
    <location>
        <begin position="64"/>
        <end position="67"/>
    </location>
</feature>
<feature type="strand" evidence="13">
    <location>
        <begin position="69"/>
        <end position="71"/>
    </location>
</feature>
<feature type="helix" evidence="15">
    <location>
        <begin position="78"/>
        <end position="94"/>
    </location>
</feature>
<feature type="strand" evidence="15">
    <location>
        <begin position="99"/>
        <end position="109"/>
    </location>
</feature>
<feature type="helix" evidence="15">
    <location>
        <begin position="110"/>
        <end position="121"/>
    </location>
</feature>
<feature type="helix" evidence="15">
    <location>
        <begin position="126"/>
        <end position="136"/>
    </location>
</feature>
<feature type="strand" evidence="13">
    <location>
        <begin position="137"/>
        <end position="139"/>
    </location>
</feature>
<feature type="helix" evidence="15">
    <location>
        <begin position="144"/>
        <end position="147"/>
    </location>
</feature>
<feature type="turn" evidence="15">
    <location>
        <begin position="148"/>
        <end position="150"/>
    </location>
</feature>
<feature type="turn" evidence="12">
    <location>
        <begin position="156"/>
        <end position="158"/>
    </location>
</feature>
<dbReference type="EC" id="3.1.3.48"/>
<dbReference type="EMBL" id="AF041434">
    <property type="protein sequence ID" value="AAC29314.1"/>
    <property type="molecule type" value="mRNA"/>
</dbReference>
<dbReference type="EMBL" id="AJ276554">
    <property type="protein sequence ID" value="CAC81757.1"/>
    <property type="molecule type" value="mRNA"/>
</dbReference>
<dbReference type="EMBL" id="BT007303">
    <property type="protein sequence ID" value="AAP35967.1"/>
    <property type="molecule type" value="mRNA"/>
</dbReference>
<dbReference type="EMBL" id="BC003105">
    <property type="protein sequence ID" value="AAH03105.1"/>
    <property type="molecule type" value="mRNA"/>
</dbReference>
<dbReference type="EMBL" id="U87168">
    <property type="protein sequence ID" value="AAB47560.1"/>
    <property type="molecule type" value="mRNA"/>
</dbReference>
<dbReference type="CCDS" id="CCDS6382.1">
    <molecule id="O75365-2"/>
</dbReference>
<dbReference type="CCDS" id="CCDS6383.1">
    <molecule id="O75365-1"/>
</dbReference>
<dbReference type="RefSeq" id="NP_009010.2">
    <molecule id="O75365-2"/>
    <property type="nucleotide sequence ID" value="NM_007079.3"/>
</dbReference>
<dbReference type="RefSeq" id="NP_116000.1">
    <molecule id="O75365-1"/>
    <property type="nucleotide sequence ID" value="NM_032611.3"/>
</dbReference>
<dbReference type="RefSeq" id="XP_005250821.1">
    <molecule id="O75365-1"/>
    <property type="nucleotide sequence ID" value="XM_005250764.3"/>
</dbReference>
<dbReference type="RefSeq" id="XP_011515105.1">
    <molecule id="O75365-1"/>
    <property type="nucleotide sequence ID" value="XM_011516803.2"/>
</dbReference>
<dbReference type="RefSeq" id="XP_011515107.1">
    <molecule id="O75365-1"/>
    <property type="nucleotide sequence ID" value="XM_011516805.2"/>
</dbReference>
<dbReference type="RefSeq" id="XP_016868487.1">
    <molecule id="O75365-2"/>
    <property type="nucleotide sequence ID" value="XM_017012998.3"/>
</dbReference>
<dbReference type="RefSeq" id="XP_024302825.1">
    <molecule id="O75365-1"/>
    <property type="nucleotide sequence ID" value="XM_024447057.2"/>
</dbReference>
<dbReference type="RefSeq" id="XP_047277243.1">
    <molecule id="O75365-1"/>
    <property type="nucleotide sequence ID" value="XM_047421287.1"/>
</dbReference>
<dbReference type="RefSeq" id="XP_047277244.1">
    <molecule id="O75365-1"/>
    <property type="nucleotide sequence ID" value="XM_047421288.1"/>
</dbReference>
<dbReference type="RefSeq" id="XP_047277245.1">
    <molecule id="O75365-1"/>
    <property type="nucleotide sequence ID" value="XM_047421289.1"/>
</dbReference>
<dbReference type="RefSeq" id="XP_047277246.1">
    <molecule id="O75365-1"/>
    <property type="nucleotide sequence ID" value="XM_047421290.1"/>
</dbReference>
<dbReference type="RefSeq" id="XP_047277247.1">
    <molecule id="O75365-1"/>
    <property type="nucleotide sequence ID" value="XM_047421291.1"/>
</dbReference>
<dbReference type="RefSeq" id="XP_047277248.1">
    <molecule id="O75365-1"/>
    <property type="nucleotide sequence ID" value="XM_047421292.1"/>
</dbReference>
<dbReference type="RefSeq" id="XP_047277249.1">
    <molecule id="O75365-1"/>
    <property type="nucleotide sequence ID" value="XM_047421293.1"/>
</dbReference>
<dbReference type="RefSeq" id="XP_047277250.1">
    <molecule id="O75365-1"/>
    <property type="nucleotide sequence ID" value="XM_047421294.1"/>
</dbReference>
<dbReference type="RefSeq" id="XP_047277254.1">
    <molecule id="O75365-2"/>
    <property type="nucleotide sequence ID" value="XM_047421298.1"/>
</dbReference>
<dbReference type="RefSeq" id="XP_047277255.1">
    <molecule id="O75365-2"/>
    <property type="nucleotide sequence ID" value="XM_047421299.1"/>
</dbReference>
<dbReference type="RefSeq" id="XP_047277256.1">
    <molecule id="O75365-2"/>
    <property type="nucleotide sequence ID" value="XM_047421300.1"/>
</dbReference>
<dbReference type="RefSeq" id="XP_047277257.1">
    <molecule id="O75365-2"/>
    <property type="nucleotide sequence ID" value="XM_047421301.1"/>
</dbReference>
<dbReference type="RefSeq" id="XP_047277258.1">
    <molecule id="O75365-2"/>
    <property type="nucleotide sequence ID" value="XM_047421302.1"/>
</dbReference>
<dbReference type="RefSeq" id="XP_047277259.1">
    <molecule id="O75365-2"/>
    <property type="nucleotide sequence ID" value="XM_047421303.1"/>
</dbReference>
<dbReference type="RefSeq" id="XP_047277260.1">
    <molecule id="O75365-2"/>
    <property type="nucleotide sequence ID" value="XM_047421304.1"/>
</dbReference>
<dbReference type="RefSeq" id="XP_047277261.1">
    <molecule id="O75365-2"/>
    <property type="nucleotide sequence ID" value="XM_047421305.1"/>
</dbReference>
<dbReference type="RefSeq" id="XP_054184761.1">
    <molecule id="O75365-1"/>
    <property type="nucleotide sequence ID" value="XM_054328786.1"/>
</dbReference>
<dbReference type="RefSeq" id="XP_054184762.1">
    <molecule id="O75365-1"/>
    <property type="nucleotide sequence ID" value="XM_054328787.1"/>
</dbReference>
<dbReference type="RefSeq" id="XP_054184763.1">
    <molecule id="O75365-1"/>
    <property type="nucleotide sequence ID" value="XM_054328788.1"/>
</dbReference>
<dbReference type="RefSeq" id="XP_054184764.1">
    <molecule id="O75365-1"/>
    <property type="nucleotide sequence ID" value="XM_054328789.1"/>
</dbReference>
<dbReference type="RefSeq" id="XP_054184765.1">
    <molecule id="O75365-1"/>
    <property type="nucleotide sequence ID" value="XM_054328790.1"/>
</dbReference>
<dbReference type="RefSeq" id="XP_054184766.1">
    <molecule id="O75365-1"/>
    <property type="nucleotide sequence ID" value="XM_054328791.1"/>
</dbReference>
<dbReference type="RefSeq" id="XP_054184767.1">
    <molecule id="O75365-1"/>
    <property type="nucleotide sequence ID" value="XM_054328792.1"/>
</dbReference>
<dbReference type="RefSeq" id="XP_054184768.1">
    <molecule id="O75365-1"/>
    <property type="nucleotide sequence ID" value="XM_054328793.1"/>
</dbReference>
<dbReference type="RefSeq" id="XP_054184769.1">
    <molecule id="O75365-1"/>
    <property type="nucleotide sequence ID" value="XM_054328794.1"/>
</dbReference>
<dbReference type="RefSeq" id="XP_054184770.1">
    <molecule id="O75365-1"/>
    <property type="nucleotide sequence ID" value="XM_054328795.1"/>
</dbReference>
<dbReference type="RefSeq" id="XP_054184771.1">
    <molecule id="O75365-1"/>
    <property type="nucleotide sequence ID" value="XM_054328796.1"/>
</dbReference>
<dbReference type="RefSeq" id="XP_054184772.1">
    <molecule id="O75365-1"/>
    <property type="nucleotide sequence ID" value="XM_054328797.1"/>
</dbReference>
<dbReference type="RefSeq" id="XP_054184773.1">
    <molecule id="O75365-1"/>
    <property type="nucleotide sequence ID" value="XM_054328798.1"/>
</dbReference>
<dbReference type="RefSeq" id="XP_054184774.1">
    <molecule id="O75365-1"/>
    <property type="nucleotide sequence ID" value="XM_054328799.1"/>
</dbReference>
<dbReference type="RefSeq" id="XP_054184775.1">
    <molecule id="O75365-1"/>
    <property type="nucleotide sequence ID" value="XM_054328800.1"/>
</dbReference>
<dbReference type="RefSeq" id="XP_054184783.1">
    <molecule id="O75365-2"/>
    <property type="nucleotide sequence ID" value="XM_054328808.1"/>
</dbReference>
<dbReference type="RefSeq" id="XP_054184784.1">
    <molecule id="O75365-2"/>
    <property type="nucleotide sequence ID" value="XM_054328809.1"/>
</dbReference>
<dbReference type="RefSeq" id="XP_054184785.1">
    <molecule id="O75365-2"/>
    <property type="nucleotide sequence ID" value="XM_054328810.1"/>
</dbReference>
<dbReference type="RefSeq" id="XP_054184786.1">
    <molecule id="O75365-2"/>
    <property type="nucleotide sequence ID" value="XM_054328811.1"/>
</dbReference>
<dbReference type="RefSeq" id="XP_054184787.1">
    <molecule id="O75365-2"/>
    <property type="nucleotide sequence ID" value="XM_054328812.1"/>
</dbReference>
<dbReference type="RefSeq" id="XP_054184788.1">
    <molecule id="O75365-2"/>
    <property type="nucleotide sequence ID" value="XM_054328813.1"/>
</dbReference>
<dbReference type="RefSeq" id="XP_054184789.1">
    <molecule id="O75365-2"/>
    <property type="nucleotide sequence ID" value="XM_054328814.1"/>
</dbReference>
<dbReference type="RefSeq" id="XP_054184790.1">
    <molecule id="O75365-2"/>
    <property type="nucleotide sequence ID" value="XM_054328815.1"/>
</dbReference>
<dbReference type="RefSeq" id="XP_054184791.1">
    <molecule id="O75365-2"/>
    <property type="nucleotide sequence ID" value="XM_054328816.1"/>
</dbReference>
<dbReference type="RefSeq" id="XP_054184792.1">
    <molecule id="O75365-2"/>
    <property type="nucleotide sequence ID" value="XM_054328817.1"/>
</dbReference>
<dbReference type="RefSeq" id="XP_054189029.1">
    <molecule id="O75365-1"/>
    <property type="nucleotide sequence ID" value="XM_054333054.1"/>
</dbReference>
<dbReference type="RefSeq" id="XP_054189030.1">
    <molecule id="O75365-1"/>
    <property type="nucleotide sequence ID" value="XM_054333055.1"/>
</dbReference>
<dbReference type="RefSeq" id="XP_054189031.1">
    <molecule id="O75365-1"/>
    <property type="nucleotide sequence ID" value="XM_054333056.1"/>
</dbReference>
<dbReference type="RefSeq" id="XP_054189032.1">
    <molecule id="O75365-1"/>
    <property type="nucleotide sequence ID" value="XM_054333057.1"/>
</dbReference>
<dbReference type="RefSeq" id="XP_054189033.1">
    <molecule id="O75365-1"/>
    <property type="nucleotide sequence ID" value="XM_054333058.1"/>
</dbReference>
<dbReference type="RefSeq" id="XP_054189034.1">
    <molecule id="O75365-1"/>
    <property type="nucleotide sequence ID" value="XM_054333059.1"/>
</dbReference>
<dbReference type="RefSeq" id="XP_054189035.1">
    <molecule id="O75365-1"/>
    <property type="nucleotide sequence ID" value="XM_054333060.1"/>
</dbReference>
<dbReference type="RefSeq" id="XP_054189036.1">
    <molecule id="O75365-1"/>
    <property type="nucleotide sequence ID" value="XM_054333061.1"/>
</dbReference>
<dbReference type="RefSeq" id="XP_054189037.1">
    <molecule id="O75365-1"/>
    <property type="nucleotide sequence ID" value="XM_054333062.1"/>
</dbReference>
<dbReference type="RefSeq" id="XP_054189038.1">
    <molecule id="O75365-1"/>
    <property type="nucleotide sequence ID" value="XM_054333063.1"/>
</dbReference>
<dbReference type="RefSeq" id="XP_054189039.1">
    <molecule id="O75365-1"/>
    <property type="nucleotide sequence ID" value="XM_054333064.1"/>
</dbReference>
<dbReference type="RefSeq" id="XP_054189045.1">
    <molecule id="O75365-2"/>
    <property type="nucleotide sequence ID" value="XM_054333070.1"/>
</dbReference>
<dbReference type="RefSeq" id="XP_054189046.1">
    <molecule id="O75365-2"/>
    <property type="nucleotide sequence ID" value="XM_054333071.1"/>
</dbReference>
<dbReference type="RefSeq" id="XP_054189047.1">
    <molecule id="O75365-2"/>
    <property type="nucleotide sequence ID" value="XM_054333072.1"/>
</dbReference>
<dbReference type="RefSeq" id="XP_054189048.1">
    <molecule id="O75365-2"/>
    <property type="nucleotide sequence ID" value="XM_054333073.1"/>
</dbReference>
<dbReference type="RefSeq" id="XP_054189049.1">
    <molecule id="O75365-2"/>
    <property type="nucleotide sequence ID" value="XM_054333074.1"/>
</dbReference>
<dbReference type="RefSeq" id="XP_054189050.1">
    <molecule id="O75365-2"/>
    <property type="nucleotide sequence ID" value="XM_054333075.1"/>
</dbReference>
<dbReference type="RefSeq" id="XP_054189051.1">
    <molecule id="O75365-2"/>
    <property type="nucleotide sequence ID" value="XM_054333076.1"/>
</dbReference>
<dbReference type="RefSeq" id="XP_054189052.1">
    <molecule id="O75365-2"/>
    <property type="nucleotide sequence ID" value="XM_054333077.1"/>
</dbReference>
<dbReference type="RefSeq" id="XP_054189053.1">
    <molecule id="O75365-2"/>
    <property type="nucleotide sequence ID" value="XM_054333078.1"/>
</dbReference>
<dbReference type="RefSeq" id="XP_054215616.1">
    <molecule id="O75365-1"/>
    <property type="nucleotide sequence ID" value="XM_054359641.1"/>
</dbReference>
<dbReference type="RefSeq" id="XP_054215617.1">
    <molecule id="O75365-1"/>
    <property type="nucleotide sequence ID" value="XM_054359642.1"/>
</dbReference>
<dbReference type="RefSeq" id="XP_054215618.1">
    <molecule id="O75365-1"/>
    <property type="nucleotide sequence ID" value="XM_054359643.1"/>
</dbReference>
<dbReference type="RefSeq" id="XP_054215619.1">
    <molecule id="O75365-1"/>
    <property type="nucleotide sequence ID" value="XM_054359644.1"/>
</dbReference>
<dbReference type="RefSeq" id="XP_054215620.1">
    <molecule id="O75365-1"/>
    <property type="nucleotide sequence ID" value="XM_054359645.1"/>
</dbReference>
<dbReference type="RefSeq" id="XP_054215621.1">
    <molecule id="O75365-1"/>
    <property type="nucleotide sequence ID" value="XM_054359646.1"/>
</dbReference>
<dbReference type="RefSeq" id="XP_054215622.1">
    <molecule id="O75365-1"/>
    <property type="nucleotide sequence ID" value="XM_054359647.1"/>
</dbReference>
<dbReference type="RefSeq" id="XP_054215623.1">
    <molecule id="O75365-1"/>
    <property type="nucleotide sequence ID" value="XM_054359648.1"/>
</dbReference>
<dbReference type="RefSeq" id="XP_054215624.1">
    <molecule id="O75365-1"/>
    <property type="nucleotide sequence ID" value="XM_054359649.1"/>
</dbReference>
<dbReference type="RefSeq" id="XP_054215625.1">
    <molecule id="O75365-1"/>
    <property type="nucleotide sequence ID" value="XM_054359650.1"/>
</dbReference>
<dbReference type="RefSeq" id="XP_054215626.1">
    <molecule id="O75365-1"/>
    <property type="nucleotide sequence ID" value="XM_054359651.1"/>
</dbReference>
<dbReference type="RefSeq" id="XP_054215627.1">
    <molecule id="O75365-1"/>
    <property type="nucleotide sequence ID" value="XM_054359652.1"/>
</dbReference>
<dbReference type="RefSeq" id="XP_054215628.1">
    <molecule id="O75365-1"/>
    <property type="nucleotide sequence ID" value="XM_054359653.1"/>
</dbReference>
<dbReference type="RefSeq" id="XP_054215629.1">
    <molecule id="O75365-1"/>
    <property type="nucleotide sequence ID" value="XM_054359654.1"/>
</dbReference>
<dbReference type="RefSeq" id="XP_054215630.1">
    <molecule id="O75365-1"/>
    <property type="nucleotide sequence ID" value="XM_054359655.1"/>
</dbReference>
<dbReference type="RefSeq" id="XP_054215638.1">
    <molecule id="O75365-2"/>
    <property type="nucleotide sequence ID" value="XM_054359663.1"/>
</dbReference>
<dbReference type="RefSeq" id="XP_054215639.1">
    <molecule id="O75365-2"/>
    <property type="nucleotide sequence ID" value="XM_054359664.1"/>
</dbReference>
<dbReference type="RefSeq" id="XP_054215640.1">
    <molecule id="O75365-2"/>
    <property type="nucleotide sequence ID" value="XM_054359665.1"/>
</dbReference>
<dbReference type="RefSeq" id="XP_054215641.1">
    <molecule id="O75365-2"/>
    <property type="nucleotide sequence ID" value="XM_054359666.1"/>
</dbReference>
<dbReference type="RefSeq" id="XP_054215642.1">
    <molecule id="O75365-2"/>
    <property type="nucleotide sequence ID" value="XM_054359667.1"/>
</dbReference>
<dbReference type="RefSeq" id="XP_054215643.1">
    <molecule id="O75365-2"/>
    <property type="nucleotide sequence ID" value="XM_054359668.1"/>
</dbReference>
<dbReference type="RefSeq" id="XP_054215644.1">
    <molecule id="O75365-2"/>
    <property type="nucleotide sequence ID" value="XM_054359669.1"/>
</dbReference>
<dbReference type="RefSeq" id="XP_054215645.1">
    <molecule id="O75365-2"/>
    <property type="nucleotide sequence ID" value="XM_054359670.1"/>
</dbReference>
<dbReference type="RefSeq" id="XP_054215646.1">
    <molecule id="O75365-2"/>
    <property type="nucleotide sequence ID" value="XM_054359671.1"/>
</dbReference>
<dbReference type="RefSeq" id="XP_054215647.1">
    <molecule id="O75365-2"/>
    <property type="nucleotide sequence ID" value="XM_054359672.1"/>
</dbReference>
<dbReference type="PDB" id="1R6H">
    <property type="method" value="NMR"/>
    <property type="chains" value="A=1-169"/>
</dbReference>
<dbReference type="PDB" id="1V3A">
    <property type="method" value="NMR"/>
    <property type="chains" value="A=1-173"/>
</dbReference>
<dbReference type="PDB" id="2MBC">
    <property type="method" value="NMR"/>
    <property type="chains" value="A=1-162"/>
</dbReference>
<dbReference type="PDB" id="5TSR">
    <property type="method" value="X-ray"/>
    <property type="resolution" value="3.19 A"/>
    <property type="chains" value="A/C=1-169"/>
</dbReference>
<dbReference type="PDBsum" id="1R6H"/>
<dbReference type="PDBsum" id="1V3A"/>
<dbReference type="PDBsum" id="2MBC"/>
<dbReference type="PDBsum" id="5TSR"/>
<dbReference type="BMRB" id="O75365"/>
<dbReference type="SMR" id="O75365"/>
<dbReference type="BioGRID" id="116327">
    <property type="interactions" value="152"/>
</dbReference>
<dbReference type="FunCoup" id="O75365">
    <property type="interactions" value="1837"/>
</dbReference>
<dbReference type="IntAct" id="O75365">
    <property type="interactions" value="49"/>
</dbReference>
<dbReference type="MINT" id="O75365"/>
<dbReference type="STRING" id="9606.ENSP00000428976"/>
<dbReference type="BindingDB" id="O75365"/>
<dbReference type="ChEMBL" id="CHEMBL4162"/>
<dbReference type="DrugCentral" id="O75365"/>
<dbReference type="GuidetoPHARMACOLOGY" id="3224"/>
<dbReference type="DEPOD" id="PTP4A3"/>
<dbReference type="GlyGen" id="O75365">
    <property type="glycosylation" value="1 site, 1 N-linked glycan (1 site)"/>
</dbReference>
<dbReference type="iPTMnet" id="O75365"/>
<dbReference type="PhosphoSitePlus" id="O75365"/>
<dbReference type="SwissPalm" id="O75365"/>
<dbReference type="BioMuta" id="PTP4A3"/>
<dbReference type="MassIVE" id="O75365"/>
<dbReference type="PaxDb" id="9606-ENSP00000332274"/>
<dbReference type="PeptideAtlas" id="O75365"/>
<dbReference type="ProteomicsDB" id="49929">
    <molecule id="O75365-1"/>
</dbReference>
<dbReference type="ProteomicsDB" id="49930">
    <molecule id="O75365-2"/>
</dbReference>
<dbReference type="ProteomicsDB" id="49931">
    <molecule id="O75365-3"/>
</dbReference>
<dbReference type="Pumba" id="O75365"/>
<dbReference type="Antibodypedia" id="27728">
    <property type="antibodies" value="365 antibodies from 35 providers"/>
</dbReference>
<dbReference type="DNASU" id="11156"/>
<dbReference type="Ensembl" id="ENST00000329397.6">
    <molecule id="O75365-1"/>
    <property type="protein sequence ID" value="ENSP00000332274.1"/>
    <property type="gene ID" value="ENSG00000184489.13"/>
</dbReference>
<dbReference type="Ensembl" id="ENST00000349124.3">
    <molecule id="O75365-1"/>
    <property type="protein sequence ID" value="ENSP00000331730.2"/>
    <property type="gene ID" value="ENSG00000184489.13"/>
</dbReference>
<dbReference type="Ensembl" id="ENST00000520105.5">
    <molecule id="O75365-2"/>
    <property type="protein sequence ID" value="ENSP00000428758.1"/>
    <property type="gene ID" value="ENSG00000184489.13"/>
</dbReference>
<dbReference type="Ensembl" id="ENST00000521578.6">
    <molecule id="O75365-1"/>
    <property type="protein sequence ID" value="ENSP00000428976.1"/>
    <property type="gene ID" value="ENSG00000184489.13"/>
</dbReference>
<dbReference type="Ensembl" id="ENST00000614325.2">
    <molecule id="O75365-2"/>
    <property type="protein sequence ID" value="ENSP00000481205.1"/>
    <property type="gene ID" value="ENSG00000275575.4"/>
</dbReference>
<dbReference type="Ensembl" id="ENST00000622569.3">
    <molecule id="O75365-1"/>
    <property type="protein sequence ID" value="ENSP00000484500.1"/>
    <property type="gene ID" value="ENSG00000275575.4"/>
</dbReference>
<dbReference type="Ensembl" id="ENST00000633518.1">
    <molecule id="O75365-1"/>
    <property type="protein sequence ID" value="ENSP00000487595.1"/>
    <property type="gene ID" value="ENSG00000275575.4"/>
</dbReference>
<dbReference type="Ensembl" id="ENST00000633621.1">
    <molecule id="O75365-2"/>
    <property type="protein sequence ID" value="ENSP00000487610.1"/>
    <property type="gene ID" value="ENSG00000275575.4"/>
</dbReference>
<dbReference type="Ensembl" id="ENST00000680615.1">
    <molecule id="O75365-1"/>
    <property type="protein sequence ID" value="ENSP00000505068.1"/>
    <property type="gene ID" value="ENSG00000184489.13"/>
</dbReference>
<dbReference type="Ensembl" id="ENST00000681443.1">
    <molecule id="O75365-2"/>
    <property type="protein sequence ID" value="ENSP00000506615.1"/>
    <property type="gene ID" value="ENSG00000184489.13"/>
</dbReference>
<dbReference type="Ensembl" id="ENST00000707614.1">
    <molecule id="O75365-2"/>
    <property type="protein sequence ID" value="ENSP00000516925.1"/>
    <property type="gene ID" value="ENSG00000291470.1"/>
</dbReference>
<dbReference type="Ensembl" id="ENST00000707616.1">
    <molecule id="O75365-1"/>
    <property type="protein sequence ID" value="ENSP00000516927.1"/>
    <property type="gene ID" value="ENSG00000291470.1"/>
</dbReference>
<dbReference type="Ensembl" id="ENST00000707617.1">
    <molecule id="O75365-1"/>
    <property type="protein sequence ID" value="ENSP00000516928.1"/>
    <property type="gene ID" value="ENSG00000291470.1"/>
</dbReference>
<dbReference type="Ensembl" id="ENST00000707618.1">
    <molecule id="O75365-1"/>
    <property type="protein sequence ID" value="ENSP00000516929.1"/>
    <property type="gene ID" value="ENSG00000291470.1"/>
</dbReference>
<dbReference type="Ensembl" id="ENST00000707619.1">
    <molecule id="O75365-1"/>
    <property type="protein sequence ID" value="ENSP00000516930.1"/>
    <property type="gene ID" value="ENSG00000291470.1"/>
</dbReference>
<dbReference type="Ensembl" id="ENST00000707620.1">
    <molecule id="O75365-2"/>
    <property type="protein sequence ID" value="ENSP00000516931.1"/>
    <property type="gene ID" value="ENSG00000291470.1"/>
</dbReference>
<dbReference type="GeneID" id="11156"/>
<dbReference type="KEGG" id="hsa:11156"/>
<dbReference type="MANE-Select" id="ENST00000521578.6">
    <property type="protein sequence ID" value="ENSP00000428976.1"/>
    <property type="RefSeq nucleotide sequence ID" value="NM_032611.3"/>
    <property type="RefSeq protein sequence ID" value="NP_116000.1"/>
</dbReference>
<dbReference type="UCSC" id="uc003ywg.2">
    <molecule id="O75365-1"/>
    <property type="organism name" value="human"/>
</dbReference>
<dbReference type="AGR" id="HGNC:9636"/>
<dbReference type="CTD" id="11156"/>
<dbReference type="DisGeNET" id="11156"/>
<dbReference type="GeneCards" id="PTP4A3"/>
<dbReference type="HGNC" id="HGNC:9636">
    <property type="gene designation" value="PTP4A3"/>
</dbReference>
<dbReference type="HPA" id="ENSG00000184489">
    <property type="expression patterns" value="Group enriched (heart muscle, pituitary gland, skeletal muscle)"/>
</dbReference>
<dbReference type="MIM" id="606449">
    <property type="type" value="gene"/>
</dbReference>
<dbReference type="neXtProt" id="NX_O75365"/>
<dbReference type="OpenTargets" id="ENSG00000184489"/>
<dbReference type="PharmGKB" id="PA33979"/>
<dbReference type="VEuPathDB" id="HostDB:ENSG00000184489"/>
<dbReference type="eggNOG" id="KOG2836">
    <property type="taxonomic scope" value="Eukaryota"/>
</dbReference>
<dbReference type="GeneTree" id="ENSGT00940000159581"/>
<dbReference type="HOGENOM" id="CLU_099263_1_0_1"/>
<dbReference type="InParanoid" id="O75365"/>
<dbReference type="OMA" id="GIEVHSW"/>
<dbReference type="OrthoDB" id="5632at2759"/>
<dbReference type="PAN-GO" id="O75365">
    <property type="GO annotations" value="4 GO annotations based on evolutionary models"/>
</dbReference>
<dbReference type="PhylomeDB" id="O75365"/>
<dbReference type="TreeFam" id="TF313384"/>
<dbReference type="PathwayCommons" id="O75365"/>
<dbReference type="SignaLink" id="O75365"/>
<dbReference type="SIGNOR" id="O75365"/>
<dbReference type="BioGRID-ORCS" id="11156">
    <property type="hits" value="25 hits in 1165 CRISPR screens"/>
</dbReference>
<dbReference type="ChiTaRS" id="PTP4A3">
    <property type="organism name" value="human"/>
</dbReference>
<dbReference type="EvolutionaryTrace" id="O75365"/>
<dbReference type="GeneWiki" id="PTP4A3"/>
<dbReference type="GenomeRNAi" id="11156"/>
<dbReference type="Pharos" id="O75365">
    <property type="development level" value="Tchem"/>
</dbReference>
<dbReference type="PRO" id="PR:O75365"/>
<dbReference type="Proteomes" id="UP000005640">
    <property type="component" value="Chromosome 8"/>
</dbReference>
<dbReference type="RNAct" id="O75365">
    <property type="molecule type" value="protein"/>
</dbReference>
<dbReference type="Bgee" id="ENSG00000184489">
    <property type="expression patterns" value="Expressed in apex of heart and 96 other cell types or tissues"/>
</dbReference>
<dbReference type="ExpressionAtlas" id="O75365">
    <property type="expression patterns" value="baseline and differential"/>
</dbReference>
<dbReference type="GO" id="GO:0005737">
    <property type="term" value="C:cytoplasm"/>
    <property type="evidence" value="ECO:0000315"/>
    <property type="project" value="CAFA"/>
</dbReference>
<dbReference type="GO" id="GO:0005769">
    <property type="term" value="C:early endosome"/>
    <property type="evidence" value="ECO:0007669"/>
    <property type="project" value="UniProtKB-SubCell"/>
</dbReference>
<dbReference type="GO" id="GO:0005634">
    <property type="term" value="C:nucleus"/>
    <property type="evidence" value="ECO:0000315"/>
    <property type="project" value="CAFA"/>
</dbReference>
<dbReference type="GO" id="GO:0005886">
    <property type="term" value="C:plasma membrane"/>
    <property type="evidence" value="ECO:0007669"/>
    <property type="project" value="UniProtKB-SubCell"/>
</dbReference>
<dbReference type="GO" id="GO:0004725">
    <property type="term" value="F:protein tyrosine phosphatase activity"/>
    <property type="evidence" value="ECO:0000318"/>
    <property type="project" value="GO_Central"/>
</dbReference>
<dbReference type="GO" id="GO:1990830">
    <property type="term" value="P:cellular response to leukemia inhibitory factor"/>
    <property type="evidence" value="ECO:0007669"/>
    <property type="project" value="Ensembl"/>
</dbReference>
<dbReference type="GO" id="GO:0043542">
    <property type="term" value="P:endothelial cell migration"/>
    <property type="evidence" value="ECO:0000315"/>
    <property type="project" value="MGI"/>
</dbReference>
<dbReference type="GO" id="GO:0007219">
    <property type="term" value="P:Notch signaling pathway"/>
    <property type="evidence" value="ECO:0007669"/>
    <property type="project" value="Ensembl"/>
</dbReference>
<dbReference type="GO" id="GO:1904951">
    <property type="term" value="P:positive regulation of establishment of protein localization"/>
    <property type="evidence" value="ECO:0000315"/>
    <property type="project" value="CAFA"/>
</dbReference>
<dbReference type="GO" id="GO:1901224">
    <property type="term" value="P:positive regulation of non-canonical NF-kappaB signal transduction"/>
    <property type="evidence" value="ECO:0000314"/>
    <property type="project" value="CAFA"/>
</dbReference>
<dbReference type="GO" id="GO:0043117">
    <property type="term" value="P:positive regulation of vascular permeability"/>
    <property type="evidence" value="ECO:0007669"/>
    <property type="project" value="Ensembl"/>
</dbReference>
<dbReference type="GO" id="GO:0006355">
    <property type="term" value="P:regulation of DNA-templated transcription"/>
    <property type="evidence" value="ECO:0000314"/>
    <property type="project" value="CAFA"/>
</dbReference>
<dbReference type="GO" id="GO:1900746">
    <property type="term" value="P:regulation of vascular endothelial growth factor signaling pathway"/>
    <property type="evidence" value="ECO:0007669"/>
    <property type="project" value="Ensembl"/>
</dbReference>
<dbReference type="CDD" id="cd18535">
    <property type="entry name" value="PTP-IVa3"/>
    <property type="match status" value="1"/>
</dbReference>
<dbReference type="FunFam" id="3.90.190.10:FF:000105">
    <property type="entry name" value="Protein tyrosine phosphatase type IVA 3"/>
    <property type="match status" value="1"/>
</dbReference>
<dbReference type="Gene3D" id="3.90.190.10">
    <property type="entry name" value="Protein tyrosine phosphatase superfamily"/>
    <property type="match status" value="1"/>
</dbReference>
<dbReference type="InterPro" id="IPR029021">
    <property type="entry name" value="Prot-tyrosine_phosphatase-like"/>
</dbReference>
<dbReference type="InterPro" id="IPR050561">
    <property type="entry name" value="PTP"/>
</dbReference>
<dbReference type="InterPro" id="IPR003595">
    <property type="entry name" value="Tyr_Pase_cat"/>
</dbReference>
<dbReference type="InterPro" id="IPR000387">
    <property type="entry name" value="Tyr_Pase_dom"/>
</dbReference>
<dbReference type="InterPro" id="IPR020422">
    <property type="entry name" value="TYR_PHOSPHATASE_DUAL_dom"/>
</dbReference>
<dbReference type="PANTHER" id="PTHR23339">
    <property type="entry name" value="TYROSINE SPECIFIC PROTEIN PHOSPHATASE AND DUAL SPECIFICITY PROTEIN PHOSPHATASE"/>
    <property type="match status" value="1"/>
</dbReference>
<dbReference type="Pfam" id="PF22785">
    <property type="entry name" value="Tc-R-P"/>
    <property type="match status" value="1"/>
</dbReference>
<dbReference type="SMART" id="SM00404">
    <property type="entry name" value="PTPc_motif"/>
    <property type="match status" value="1"/>
</dbReference>
<dbReference type="SUPFAM" id="SSF52799">
    <property type="entry name" value="(Phosphotyrosine protein) phosphatases II"/>
    <property type="match status" value="1"/>
</dbReference>
<dbReference type="PROSITE" id="PS50056">
    <property type="entry name" value="TYR_PHOSPHATASE_2"/>
    <property type="match status" value="1"/>
</dbReference>
<dbReference type="PROSITE" id="PS50054">
    <property type="entry name" value="TYR_PHOSPHATASE_DUAL"/>
    <property type="match status" value="1"/>
</dbReference>
<proteinExistence type="evidence at protein level"/>
<protein>
    <recommendedName>
        <fullName>Protein tyrosine phosphatase type IVA 3</fullName>
        <ecNumber>3.1.3.48</ecNumber>
    </recommendedName>
    <alternativeName>
        <fullName>PRL-R</fullName>
    </alternativeName>
    <alternativeName>
        <fullName>Protein-tyrosine phosphatase 4a3</fullName>
    </alternativeName>
    <alternativeName>
        <fullName>Protein-tyrosine phosphatase of regenerating liver 3</fullName>
        <shortName>PRL-3</shortName>
    </alternativeName>
</protein>
<name>TP4A3_HUMAN</name>
<evidence type="ECO:0000250" key="1"/>
<evidence type="ECO:0000255" key="2">
    <source>
        <dbReference type="PROSITE-ProRule" id="PRU00160"/>
    </source>
</evidence>
<evidence type="ECO:0000269" key="3">
    <source>
    </source>
</evidence>
<evidence type="ECO:0000269" key="4">
    <source>
    </source>
</evidence>
<evidence type="ECO:0000269" key="5">
    <source>
    </source>
</evidence>
<evidence type="ECO:0000269" key="6">
    <source>
    </source>
</evidence>
<evidence type="ECO:0000269" key="7">
    <source>
    </source>
</evidence>
<evidence type="ECO:0000303" key="8">
    <source>
    </source>
</evidence>
<evidence type="ECO:0000303" key="9">
    <source ref="2"/>
</evidence>
<evidence type="ECO:0000303" key="10">
    <source ref="3"/>
</evidence>
<evidence type="ECO:0000305" key="11"/>
<evidence type="ECO:0007829" key="12">
    <source>
        <dbReference type="PDB" id="1R6H"/>
    </source>
</evidence>
<evidence type="ECO:0007829" key="13">
    <source>
        <dbReference type="PDB" id="1V3A"/>
    </source>
</evidence>
<evidence type="ECO:0007829" key="14">
    <source>
        <dbReference type="PDB" id="2MBC"/>
    </source>
</evidence>
<evidence type="ECO:0007829" key="15">
    <source>
        <dbReference type="PDB" id="5TSR"/>
    </source>
</evidence>
<organism>
    <name type="scientific">Homo sapiens</name>
    <name type="common">Human</name>
    <dbReference type="NCBI Taxonomy" id="9606"/>
    <lineage>
        <taxon>Eukaryota</taxon>
        <taxon>Metazoa</taxon>
        <taxon>Chordata</taxon>
        <taxon>Craniata</taxon>
        <taxon>Vertebrata</taxon>
        <taxon>Euteleostomi</taxon>
        <taxon>Mammalia</taxon>
        <taxon>Eutheria</taxon>
        <taxon>Euarchontoglires</taxon>
        <taxon>Primates</taxon>
        <taxon>Haplorrhini</taxon>
        <taxon>Catarrhini</taxon>
        <taxon>Hominidae</taxon>
        <taxon>Homo</taxon>
    </lineage>
</organism>
<gene>
    <name type="primary">PTP4A3</name>
    <name type="synonym">PRL3</name>
</gene>
<sequence length="173" mass="19535">MARMNRPAPVEVSYKHMRFLITHNPTNATLSTFIEDLKKYGATTVVRVCEVTYDKTPLEKDGITVVDWPFDDGAPPPGKVVEDWLSLVKAKFCEAPGSCVAVHCVAGLGRAPVLVALALIESGMKYEDAIQFIRQKRRGAINSKQLTYLEKYRPKQRLRFKDPHTHKTRCCVM</sequence>
<keyword id="KW-0002">3D-structure</keyword>
<keyword id="KW-0025">Alternative splicing</keyword>
<keyword id="KW-1003">Cell membrane</keyword>
<keyword id="KW-1015">Disulfide bond</keyword>
<keyword id="KW-0967">Endosome</keyword>
<keyword id="KW-0378">Hydrolase</keyword>
<keyword id="KW-0449">Lipoprotein</keyword>
<keyword id="KW-0472">Membrane</keyword>
<keyword id="KW-0488">Methylation</keyword>
<keyword id="KW-0636">Prenylation</keyword>
<keyword id="KW-0904">Protein phosphatase</keyword>
<keyword id="KW-1267">Proteomics identification</keyword>
<keyword id="KW-1185">Reference proteome</keyword>
<comment type="function">
    <text evidence="3 6">Protein tyrosine phosphatase which stimulates progression from G1 into S phase during mitosis. Enhances cell proliferation, cell motility and invasive activity, and promotes cancer metastasis. May be involved in the progression of cardiac hypertrophy by inhibiting intracellular calcium mobilization in response to angiotensin II.</text>
</comment>
<comment type="catalytic activity">
    <reaction>
        <text>O-phospho-L-tyrosyl-[protein] + H2O = L-tyrosyl-[protein] + phosphate</text>
        <dbReference type="Rhea" id="RHEA:10684"/>
        <dbReference type="Rhea" id="RHEA-COMP:10136"/>
        <dbReference type="Rhea" id="RHEA-COMP:20101"/>
        <dbReference type="ChEBI" id="CHEBI:15377"/>
        <dbReference type="ChEBI" id="CHEBI:43474"/>
        <dbReference type="ChEBI" id="CHEBI:46858"/>
        <dbReference type="ChEBI" id="CHEBI:61978"/>
        <dbReference type="EC" id="3.1.3.48"/>
    </reaction>
</comment>
<comment type="activity regulation">
    <text evidence="3 5">Inhibited by sodium orthovanadate and peroxovanadium compounds, and by pentamidine.</text>
</comment>
<comment type="subunit">
    <text evidence="4">Interacts with tubulin.</text>
</comment>
<comment type="subcellular location">
    <subcellularLocation>
        <location evidence="6">Cell membrane</location>
    </subcellularLocation>
    <subcellularLocation>
        <location evidence="6">Early endosome</location>
    </subcellularLocation>
</comment>
<comment type="alternative products">
    <event type="alternative splicing"/>
    <isoform>
        <id>O75365-1</id>
        <name>1</name>
        <sequence type="displayed"/>
    </isoform>
    <isoform>
        <id>O75365-2</id>
        <name>2</name>
        <sequence type="described" ref="VSP_014407"/>
    </isoform>
    <isoform>
        <id>O75365-3</id>
        <name>3</name>
        <name>short</name>
        <sequence type="described" ref="VSP_014406"/>
    </isoform>
    <text>Additional isoforms seem to exist.</text>
</comment>
<comment type="tissue specificity">
    <text evidence="3">Mainly expressed in cardiomyocytes and skeletal muscle; also found in pancreas. Consistently overexpressed in colon cancer metastasis.</text>
</comment>
<comment type="PTM">
    <text evidence="1">Farnesylated. Farnesylation is required for membrane targeting (By similarity).</text>
</comment>
<comment type="miscellaneous">
    <molecule>Isoform 2</molecule>
    <text evidence="11">Unstructured and inactive.</text>
</comment>
<comment type="similarity">
    <text evidence="11">Belongs to the protein-tyrosine phosphatase family.</text>
</comment>
<accession>O75365</accession>
<accession>Q8IVN5</accession>
<accession>Q99849</accession>
<accession>Q9BTW5</accession>